<name>SUMO2_RAT</name>
<dbReference type="EMBL" id="L79949">
    <property type="protein sequence ID" value="AAL40175.1"/>
    <property type="molecule type" value="mRNA"/>
</dbReference>
<dbReference type="EMBL" id="BC058446">
    <property type="protein sequence ID" value="AAH58446.1"/>
    <property type="molecule type" value="mRNA"/>
</dbReference>
<dbReference type="EMBL" id="BC078746">
    <property type="protein sequence ID" value="AAH78746.1"/>
    <property type="molecule type" value="mRNA"/>
</dbReference>
<dbReference type="RefSeq" id="NP_598278.1">
    <property type="nucleotide sequence ID" value="NM_133594.2"/>
</dbReference>
<dbReference type="BMRB" id="P61959"/>
<dbReference type="SMR" id="P61959"/>
<dbReference type="BioGRID" id="605061">
    <property type="interactions" value="2"/>
</dbReference>
<dbReference type="DIP" id="DIP-46502N"/>
<dbReference type="FunCoup" id="P61959">
    <property type="interactions" value="3690"/>
</dbReference>
<dbReference type="IntAct" id="P61959">
    <property type="interactions" value="1"/>
</dbReference>
<dbReference type="STRING" id="10116.ENSRNOP00000004867"/>
<dbReference type="iPTMnet" id="P61959"/>
<dbReference type="PhosphoSitePlus" id="P61959"/>
<dbReference type="jPOST" id="P61959"/>
<dbReference type="PaxDb" id="10116-ENSRNOP00000044856"/>
<dbReference type="Ensembl" id="ENSRNOT00000049609.5">
    <property type="protein sequence ID" value="ENSRNOP00000044856.3"/>
    <property type="gene ID" value="ENSRNOG00000003661.7"/>
</dbReference>
<dbReference type="GeneID" id="690244"/>
<dbReference type="KEGG" id="rno:690244"/>
<dbReference type="AGR" id="RGD:621761"/>
<dbReference type="CTD" id="6613"/>
<dbReference type="RGD" id="621761">
    <property type="gene designation" value="Sumo2"/>
</dbReference>
<dbReference type="eggNOG" id="KOG1769">
    <property type="taxonomic scope" value="Eukaryota"/>
</dbReference>
<dbReference type="GeneTree" id="ENSGT00940000162422"/>
<dbReference type="InParanoid" id="P61959"/>
<dbReference type="OrthoDB" id="11308at9989"/>
<dbReference type="PhylomeDB" id="P61959"/>
<dbReference type="Reactome" id="R-RNO-196791">
    <property type="pathway name" value="Vitamin D (calciferol) metabolism"/>
</dbReference>
<dbReference type="Reactome" id="R-RNO-3065679">
    <property type="pathway name" value="SUMO is proteolytically processed"/>
</dbReference>
<dbReference type="Reactome" id="R-RNO-3108214">
    <property type="pathway name" value="SUMOylation of DNA damage response and repair proteins"/>
</dbReference>
<dbReference type="Reactome" id="R-RNO-3232118">
    <property type="pathway name" value="SUMOylation of transcription factors"/>
</dbReference>
<dbReference type="Reactome" id="R-RNO-3899300">
    <property type="pathway name" value="SUMOylation of transcription cofactors"/>
</dbReference>
<dbReference type="Reactome" id="R-RNO-4085377">
    <property type="pathway name" value="SUMOylation of SUMOylation proteins"/>
</dbReference>
<dbReference type="Reactome" id="R-RNO-4090294">
    <property type="pathway name" value="SUMOylation of intracellular receptors"/>
</dbReference>
<dbReference type="Reactome" id="R-RNO-4551638">
    <property type="pathway name" value="SUMOylation of chromatin organization proteins"/>
</dbReference>
<dbReference type="Reactome" id="R-RNO-4570464">
    <property type="pathway name" value="SUMOylation of RNA binding proteins"/>
</dbReference>
<dbReference type="Reactome" id="R-RNO-4615885">
    <property type="pathway name" value="SUMOylation of DNA replication proteins"/>
</dbReference>
<dbReference type="Reactome" id="R-RNO-5693607">
    <property type="pathway name" value="Processing of DNA double-strand break ends"/>
</dbReference>
<dbReference type="Reactome" id="R-RNO-5696395">
    <property type="pathway name" value="Formation of Incision Complex in GG-NER"/>
</dbReference>
<dbReference type="PRO" id="PR:P61959"/>
<dbReference type="Proteomes" id="UP000002494">
    <property type="component" value="Chromosome 10"/>
</dbReference>
<dbReference type="GO" id="GO:0098982">
    <property type="term" value="C:GABA-ergic synapse"/>
    <property type="evidence" value="ECO:0000266"/>
    <property type="project" value="RGD"/>
</dbReference>
<dbReference type="GO" id="GO:0098978">
    <property type="term" value="C:glutamatergic synapse"/>
    <property type="evidence" value="ECO:0000266"/>
    <property type="project" value="RGD"/>
</dbReference>
<dbReference type="GO" id="GO:0098686">
    <property type="term" value="C:hippocampal mossy fiber to CA3 synapse"/>
    <property type="evidence" value="ECO:0000266"/>
    <property type="project" value="RGD"/>
</dbReference>
<dbReference type="GO" id="GO:0005634">
    <property type="term" value="C:nucleus"/>
    <property type="evidence" value="ECO:0000266"/>
    <property type="project" value="RGD"/>
</dbReference>
<dbReference type="GO" id="GO:0016605">
    <property type="term" value="C:PML body"/>
    <property type="evidence" value="ECO:0000250"/>
    <property type="project" value="UniProtKB"/>
</dbReference>
<dbReference type="GO" id="GO:0098794">
    <property type="term" value="C:postsynapse"/>
    <property type="evidence" value="ECO:0000266"/>
    <property type="project" value="RGD"/>
</dbReference>
<dbReference type="GO" id="GO:0099524">
    <property type="term" value="C:postsynaptic cytosol"/>
    <property type="evidence" value="ECO:0000266"/>
    <property type="project" value="RGD"/>
</dbReference>
<dbReference type="GO" id="GO:0098793">
    <property type="term" value="C:presynapse"/>
    <property type="evidence" value="ECO:0000266"/>
    <property type="project" value="RGD"/>
</dbReference>
<dbReference type="GO" id="GO:0099523">
    <property type="term" value="C:presynaptic cytosol"/>
    <property type="evidence" value="ECO:0000266"/>
    <property type="project" value="RGD"/>
</dbReference>
<dbReference type="GO" id="GO:0046965">
    <property type="term" value="F:nuclear retinoid X receptor binding"/>
    <property type="evidence" value="ECO:0000314"/>
    <property type="project" value="RGD"/>
</dbReference>
<dbReference type="GO" id="GO:0031386">
    <property type="term" value="F:protein tag activity"/>
    <property type="evidence" value="ECO:0000318"/>
    <property type="project" value="GO_Central"/>
</dbReference>
<dbReference type="GO" id="GO:0019789">
    <property type="term" value="F:SUMO transferase activity"/>
    <property type="evidence" value="ECO:0000266"/>
    <property type="project" value="RGD"/>
</dbReference>
<dbReference type="GO" id="GO:0031625">
    <property type="term" value="F:ubiquitin protein ligase binding"/>
    <property type="evidence" value="ECO:0000250"/>
    <property type="project" value="UniProtKB"/>
</dbReference>
<dbReference type="GO" id="GO:0044389">
    <property type="term" value="F:ubiquitin-like protein ligase binding"/>
    <property type="evidence" value="ECO:0000318"/>
    <property type="project" value="GO_Central"/>
</dbReference>
<dbReference type="GO" id="GO:0045892">
    <property type="term" value="P:negative regulation of DNA-templated transcription"/>
    <property type="evidence" value="ECO:0000315"/>
    <property type="project" value="UniProtKB"/>
</dbReference>
<dbReference type="GO" id="GO:0032436">
    <property type="term" value="P:positive regulation of proteasomal ubiquitin-dependent protein catabolic process"/>
    <property type="evidence" value="ECO:0000266"/>
    <property type="project" value="RGD"/>
</dbReference>
<dbReference type="GO" id="GO:0033235">
    <property type="term" value="P:positive regulation of protein sumoylation"/>
    <property type="evidence" value="ECO:0000314"/>
    <property type="project" value="RGD"/>
</dbReference>
<dbReference type="GO" id="GO:0045944">
    <property type="term" value="P:positive regulation of transcription by RNA polymerase II"/>
    <property type="evidence" value="ECO:0000266"/>
    <property type="project" value="RGD"/>
</dbReference>
<dbReference type="GO" id="GO:0008104">
    <property type="term" value="P:protein localization"/>
    <property type="evidence" value="ECO:0000314"/>
    <property type="project" value="UniProtKB"/>
</dbReference>
<dbReference type="GO" id="GO:0016925">
    <property type="term" value="P:protein sumoylation"/>
    <property type="evidence" value="ECO:0000314"/>
    <property type="project" value="UniProtKB"/>
</dbReference>
<dbReference type="CDD" id="cd16115">
    <property type="entry name" value="Ubl_SUMO2_3_4"/>
    <property type="match status" value="1"/>
</dbReference>
<dbReference type="FunFam" id="3.10.20.90:FF:000482">
    <property type="entry name" value="Small ubiquitin-related modifier 2"/>
    <property type="match status" value="1"/>
</dbReference>
<dbReference type="Gene3D" id="3.10.20.90">
    <property type="entry name" value="Phosphatidylinositol 3-kinase Catalytic Subunit, Chain A, domain 1"/>
    <property type="match status" value="1"/>
</dbReference>
<dbReference type="InterPro" id="IPR022617">
    <property type="entry name" value="Rad60/SUMO-like_dom"/>
</dbReference>
<dbReference type="InterPro" id="IPR000626">
    <property type="entry name" value="Ubiquitin-like_dom"/>
</dbReference>
<dbReference type="InterPro" id="IPR029071">
    <property type="entry name" value="Ubiquitin-like_domsf"/>
</dbReference>
<dbReference type="PANTHER" id="PTHR10562">
    <property type="entry name" value="SMALL UBIQUITIN-RELATED MODIFIER"/>
    <property type="match status" value="1"/>
</dbReference>
<dbReference type="Pfam" id="PF11976">
    <property type="entry name" value="Rad60-SLD"/>
    <property type="match status" value="1"/>
</dbReference>
<dbReference type="SMART" id="SM00213">
    <property type="entry name" value="UBQ"/>
    <property type="match status" value="1"/>
</dbReference>
<dbReference type="SUPFAM" id="SSF54236">
    <property type="entry name" value="Ubiquitin-like"/>
    <property type="match status" value="1"/>
</dbReference>
<dbReference type="PROSITE" id="PS50053">
    <property type="entry name" value="UBIQUITIN_2"/>
    <property type="match status" value="1"/>
</dbReference>
<sequence>MADEKPKEGVKTENNDHINLKVAGQDGSVVQFKIKRHTPLSKLMKAYCERQGLSMRQIRFRFDGQPINETDTPAQLEMEDEDTIDVFQQQTGGVY</sequence>
<reference key="1">
    <citation type="submission" date="1997-06" db="EMBL/GenBank/DDBJ databases">
        <authorList>
            <person name="Mannen H."/>
            <person name="Tsoi S.C.-M."/>
            <person name="Krushkal J.S."/>
            <person name="Li W.-H."/>
            <person name="Li S.S.-L."/>
        </authorList>
    </citation>
    <scope>NUCLEOTIDE SEQUENCE [MRNA]</scope>
    <source>
        <strain>Sprague-Dawley</strain>
        <tissue>Testis</tissue>
    </source>
</reference>
<reference key="2">
    <citation type="journal article" date="2004" name="Genome Res.">
        <title>The status, quality, and expansion of the NIH full-length cDNA project: the Mammalian Gene Collection (MGC).</title>
        <authorList>
            <consortium name="The MGC Project Team"/>
        </authorList>
    </citation>
    <scope>NUCLEOTIDE SEQUENCE [LARGE SCALE MRNA]</scope>
    <source>
        <tissue>Lung</tissue>
        <tissue>Pituitary</tissue>
    </source>
</reference>
<reference key="3">
    <citation type="submission" date="2007-09" db="UniProtKB">
        <authorList>
            <person name="Lubec G."/>
            <person name="Kang S.U."/>
            <person name="Lubec S."/>
        </authorList>
    </citation>
    <scope>PROTEIN SEQUENCE OF 12-33</scope>
    <scope>IDENTIFICATION BY MASS SPECTROMETRY</scope>
    <source>
        <strain>Sprague-Dawley</strain>
        <tissue>Brain</tissue>
    </source>
</reference>
<comment type="function">
    <text evidence="2">Ubiquitin-like protein that can be covalently attached to proteins as a monomer or as a lysine-linked polymer. Covalent attachment via an isopeptide bond to its substrates requires prior activation by the E1 complex SAE1-SAE2 and linkage to the E2 enzyme UBE2I, and can be promoted by an E3 ligase such as PIAS1-4, RANBP2 or CBX4. This post-translational modification on lysine residues of proteins plays a crucial role in a number of cellular processes such as nuclear transport, DNA replication and repair, mitosis and signal transduction. Polymeric SUMO2 chains are also susceptible to polyubiquitination which functions as a signal for proteasomal degradation of modified proteins. Plays a role in the regulation of sumoylation status of SETX (By similarity).</text>
</comment>
<comment type="subunit">
    <text evidence="2 3">Interacts with SAE2 and UBE2I. Interacts with ZNF451. Identified in a complex with ZNF451 and UBE2I/UBC9, where one ZNF451 interacts with one UBE2I/UBC9 and two SUMO2 chains, one bound to the UBE2I/UBC9 active site and the other to another region of the same UBE2I/UBC9 molecule. Covalently attached to a number of proteins. Interacts with PELP1. Interacts with USP25; the interaction sumoylates USP25. Interacts with SIMC1, CASP8AP2, RNF111 and SOBP (via SIM domains). Interacts with MTA1 (By similarity). Interacts with HINT1 (By similarity). Interacts with GCNA (via SIM domains); this interaction allows the GCNA recruitment to DPCs sites (By similarity).</text>
</comment>
<comment type="subcellular location">
    <subcellularLocation>
        <location evidence="1">Nucleus</location>
    </subcellularLocation>
    <subcellularLocation>
        <location evidence="1">Nucleus</location>
        <location evidence="1">PML body</location>
    </subcellularLocation>
</comment>
<comment type="PTM">
    <text evidence="1">Polymeric chains can be formed through Lys-11 cross-linking. Polymeric SUMO2 chains undergo 'Lys-6'-, 'Lys-11'-, 'Lys-48'- and 'Lys-63'-linked polyubiquitination by RNF4 (By similarity).</text>
</comment>
<comment type="PTM">
    <text evidence="1">Cleavage of precursor form by SENP1 or SENP2 is necessary for function.</text>
</comment>
<comment type="PTM">
    <text evidence="1">Monoubiquitinated N-terminally by UBE2W, which primes it for RNF4-dependent polyubiquitination by the UBE2V1-UBE2N heterodimer.</text>
</comment>
<comment type="similarity">
    <text evidence="5">Belongs to the ubiquitin family. SUMO subfamily.</text>
</comment>
<proteinExistence type="evidence at protein level"/>
<keyword id="KW-0007">Acetylation</keyword>
<keyword id="KW-0903">Direct protein sequencing</keyword>
<keyword id="KW-1017">Isopeptide bond</keyword>
<keyword id="KW-0539">Nucleus</keyword>
<keyword id="KW-1185">Reference proteome</keyword>
<keyword id="KW-0832">Ubl conjugation</keyword>
<keyword id="KW-0833">Ubl conjugation pathway</keyword>
<accession>P61959</accession>
<accession>P55855</accession>
<evidence type="ECO:0000250" key="1"/>
<evidence type="ECO:0000250" key="2">
    <source>
        <dbReference type="UniProtKB" id="P61956"/>
    </source>
</evidence>
<evidence type="ECO:0000250" key="3">
    <source>
        <dbReference type="UniProtKB" id="P61957"/>
    </source>
</evidence>
<evidence type="ECO:0000255" key="4">
    <source>
        <dbReference type="PROSITE-ProRule" id="PRU00214"/>
    </source>
</evidence>
<evidence type="ECO:0000305" key="5"/>
<feature type="chain" id="PRO_0000035955" description="Small ubiquitin-related modifier 2">
    <location>
        <begin position="1"/>
        <end position="93"/>
    </location>
</feature>
<feature type="propeptide" id="PRO_0000035956" evidence="1">
    <location>
        <begin position="94"/>
        <end position="95"/>
    </location>
</feature>
<feature type="domain" description="Ubiquitin-like" evidence="4">
    <location>
        <begin position="16"/>
        <end position="95"/>
    </location>
</feature>
<feature type="modified residue" description="N6-acetyllysine; alternate" evidence="2">
    <location>
        <position position="11"/>
    </location>
</feature>
<feature type="cross-link" description="Peptide (Met-Gly) (interchain with G-Cter in ubiquitin)" evidence="1">
    <location>
        <position position="1"/>
    </location>
</feature>
<feature type="cross-link" description="Glycyl lysine isopeptide (Lys-Gly) (interchain with G-Cter in SUMO2)" evidence="2">
    <location>
        <position position="5"/>
    </location>
</feature>
<feature type="cross-link" description="Glycyl lysine isopeptide (Lys-Gly) (interchain with G-Cter in SUMO2)" evidence="2">
    <location>
        <position position="7"/>
    </location>
</feature>
<feature type="cross-link" description="Glycyl lysine isopeptide (Lys-Gly) (interchain with G-Cter in SUMO); alternate" evidence="1">
    <location>
        <position position="11"/>
    </location>
</feature>
<feature type="cross-link" description="Glycyl lysine isopeptide (Lys-Gly) (interchain with G-Cter in SUMO1); alternate" evidence="2">
    <location>
        <position position="11"/>
    </location>
</feature>
<feature type="cross-link" description="Glycyl lysine isopeptide (Lys-Gly) (interchain with G-Cter in SUMO2); alternate" evidence="2">
    <location>
        <position position="11"/>
    </location>
</feature>
<feature type="cross-link" description="Glycyl lysine isopeptide (Lys-Gly) (interchain with G-Cter in ubiquitin); alternate" evidence="2">
    <location>
        <position position="11"/>
    </location>
</feature>
<feature type="cross-link" description="Glycyl lysine isopeptide (Lys-Gly) (interchain with G-Cter in SUMO2)" evidence="2">
    <location>
        <position position="21"/>
    </location>
</feature>
<feature type="cross-link" description="Glycyl lysine isopeptide (Gly-Lys) (interchain with K-? in acceptor proteins)" evidence="4">
    <location>
        <position position="93"/>
    </location>
</feature>
<gene>
    <name type="primary">Sumo2</name>
    <name type="synonym">Smt3a</name>
    <name type="synonym">Smt3h2</name>
</gene>
<organism>
    <name type="scientific">Rattus norvegicus</name>
    <name type="common">Rat</name>
    <dbReference type="NCBI Taxonomy" id="10116"/>
    <lineage>
        <taxon>Eukaryota</taxon>
        <taxon>Metazoa</taxon>
        <taxon>Chordata</taxon>
        <taxon>Craniata</taxon>
        <taxon>Vertebrata</taxon>
        <taxon>Euteleostomi</taxon>
        <taxon>Mammalia</taxon>
        <taxon>Eutheria</taxon>
        <taxon>Euarchontoglires</taxon>
        <taxon>Glires</taxon>
        <taxon>Rodentia</taxon>
        <taxon>Myomorpha</taxon>
        <taxon>Muroidea</taxon>
        <taxon>Muridae</taxon>
        <taxon>Murinae</taxon>
        <taxon>Rattus</taxon>
    </lineage>
</organism>
<protein>
    <recommendedName>
        <fullName>Small ubiquitin-related modifier 2</fullName>
        <shortName>SUMO-2</shortName>
    </recommendedName>
    <alternativeName>
        <fullName>SMT3 homolog 2</fullName>
    </alternativeName>
    <alternativeName>
        <fullName>Sentrin-2</fullName>
    </alternativeName>
    <alternativeName>
        <fullName>Ubiquitin-like protein SMT3A</fullName>
        <shortName>Smt3A</shortName>
    </alternativeName>
</protein>